<evidence type="ECO:0000255" key="1">
    <source>
        <dbReference type="HAMAP-Rule" id="MF_04129"/>
    </source>
</evidence>
<feature type="chain" id="PRO_0000368169" description="Intermediate capsid protein VP6">
    <location>
        <begin position="1"/>
        <end position="397"/>
    </location>
</feature>
<feature type="region of interest" description="Interaction with the inner capsid protein VP2" evidence="1">
    <location>
        <begin position="62"/>
        <end position="73"/>
    </location>
</feature>
<feature type="binding site" evidence="1">
    <location>
        <position position="153"/>
    </location>
    <ligand>
        <name>Zn(2+)</name>
        <dbReference type="ChEBI" id="CHEBI:29105"/>
        <note>ligand shared between all trimeric partners</note>
    </ligand>
</feature>
<feature type="binding site" evidence="1">
    <location>
        <position position="266"/>
    </location>
    <ligand>
        <name>Ca(2+)</name>
        <dbReference type="ChEBI" id="CHEBI:29108"/>
    </ligand>
</feature>
<feature type="binding site" evidence="1">
    <location>
        <position position="286"/>
    </location>
    <ligand>
        <name>Ca(2+)</name>
        <dbReference type="ChEBI" id="CHEBI:29108"/>
    </ligand>
</feature>
<comment type="function">
    <text evidence="1">Intermediate capsid protein that self assembles to form an icosahedral capsid with a T=13 symmetry, which consists of 230 trimers of VP6, with channels at each of its five-fold vertices. This capsid constitutes the middle concentric layer of the viral mature particle. The innermost VP2 capsid and the intermediate VP6 capsid remain intact following cell entry to protect the dsRNA from degradation and to prevent unfavorable antiviral responses in the host cell during all the replication cycle of the virus. Nascent transcripts are transcribed within the structural confines of this double-layered particle (DLP) and are extruded through the channels at the five-fold axes. VP6 is required for the transcription activity of the DLP.</text>
</comment>
<comment type="subunit">
    <text evidence="1">Homotrimer. Interacts with the inner capsid protein VP2. Interacts with the outer capsid glycoprotein VP7. Interacts with the outer capsid protein VP5*.</text>
</comment>
<comment type="subcellular location">
    <subcellularLocation>
        <location evidence="1">Virion</location>
    </subcellularLocation>
    <text evidence="1">Component of the intermediate capsid. Also found in spherical cytoplasmic structures, called virus factories, that appear early after infection and are the site of viral replication and packaging.</text>
</comment>
<comment type="PTM">
    <text evidence="1">The N-terminus is blocked.</text>
</comment>
<comment type="PTM">
    <text evidence="1">Sumoylated with SUMO1 and SUMO2. Sumoylation of viral proteins seems to have a positive role on viral replication.</text>
</comment>
<comment type="miscellaneous">
    <text evidence="1">The VP6 trimer contains a zinc ion located at the center of the molecule. The zinc ion is not essential for either trimerization or transcription activity of the DLP. Zinc-depleted VP6 has an increased sensitivity to proteases.</text>
</comment>
<comment type="similarity">
    <text evidence="1">Belongs to the rotavirus VP6 family.</text>
</comment>
<organismHost>
    <name type="scientific">Macaca mulatta</name>
    <name type="common">Rhesus macaque</name>
    <dbReference type="NCBI Taxonomy" id="9544"/>
</organismHost>
<accession>Q6PMI4</accession>
<sequence>MDVLFSLSKTLKDARDKIVEGTLYSNVSDLIQQFNQMLITMNGNEFQTGGIGNLPIRNWQFDFGLLGTTLLNLDANYVENARTTIEYFVDFVDNVCMDEMVRESQRNGIAPQSDALRKLSGIKFKRINFDNSSEYIENWNLQSRRQRTGFTFHKPNIFPYSASFTLNRSQPQHDNLMGTMWLNAGSELQVAGFDYSCAINAPANTQQFEHIVQLRRVLTTATITLLPDAERFSFPRVINSADGATTWYFNPVVLRPNNVEIEFLLNGQIINTYQARFGTIIARNFDTIRLSFQLLRPPNMTPAVAALFPNAQPFEHHATVGLTLRIDSAVCESVLADANETMLANVTAVRQEYAIPVGPVFPPGMNWTDLITNYSPSREDNLQRVFTVASIRSMLIK</sequence>
<proteinExistence type="inferred from homology"/>
<name>VP6_ROTTU</name>
<protein>
    <recommendedName>
        <fullName evidence="1">Intermediate capsid protein VP6</fullName>
    </recommendedName>
</protein>
<reference key="1">
    <citation type="journal article" date="2005" name="J. Virol.">
        <title>Development of a rotavirus-shedding model in rhesus macaques, using a homologous wild-type rotavirus of a new P genotype.</title>
        <authorList>
            <person name="McNeal M.M."/>
            <person name="Sestak K."/>
            <person name="Choi A.H."/>
            <person name="Basu M."/>
            <person name="Cole M.J."/>
            <person name="Aye P.P."/>
            <person name="Bohm R.P."/>
            <person name="Ward R.L."/>
        </authorList>
    </citation>
    <scope>NUCLEOTIDE SEQUENCE [GENOMIC RNA]</scope>
</reference>
<keyword id="KW-0106">Calcium</keyword>
<keyword id="KW-0167">Capsid protein</keyword>
<keyword id="KW-1154">Intermediate capsid protein</keyword>
<keyword id="KW-0479">Metal-binding</keyword>
<keyword id="KW-0832">Ubl conjugation</keyword>
<keyword id="KW-0946">Virion</keyword>
<keyword id="KW-0862">Zinc</keyword>
<dbReference type="EMBL" id="AY594670">
    <property type="protein sequence ID" value="AAT01503.1"/>
    <property type="molecule type" value="Genomic_RNA"/>
</dbReference>
<dbReference type="SMR" id="Q6PMI4"/>
<dbReference type="GO" id="GO:0019031">
    <property type="term" value="C:viral envelope"/>
    <property type="evidence" value="ECO:0007669"/>
    <property type="project" value="UniProtKB-UniRule"/>
</dbReference>
<dbReference type="GO" id="GO:0039626">
    <property type="term" value="C:viral intermediate capsid"/>
    <property type="evidence" value="ECO:0007669"/>
    <property type="project" value="UniProtKB-UniRule"/>
</dbReference>
<dbReference type="GO" id="GO:0046789">
    <property type="term" value="F:host cell surface receptor binding"/>
    <property type="evidence" value="ECO:0007669"/>
    <property type="project" value="UniProtKB-UniRule"/>
</dbReference>
<dbReference type="GO" id="GO:0046872">
    <property type="term" value="F:metal ion binding"/>
    <property type="evidence" value="ECO:0007669"/>
    <property type="project" value="UniProtKB-UniRule"/>
</dbReference>
<dbReference type="GO" id="GO:0005198">
    <property type="term" value="F:structural molecule activity"/>
    <property type="evidence" value="ECO:0007669"/>
    <property type="project" value="UniProtKB-UniRule"/>
</dbReference>
<dbReference type="GO" id="GO:0019064">
    <property type="term" value="P:fusion of virus membrane with host plasma membrane"/>
    <property type="evidence" value="ECO:0007669"/>
    <property type="project" value="UniProtKB-UniRule"/>
</dbReference>
<dbReference type="FunFam" id="2.60.120.170:FF:000001">
    <property type="entry name" value="Intermediate capsid protein VP6"/>
    <property type="match status" value="1"/>
</dbReference>
<dbReference type="Gene3D" id="2.60.120.170">
    <property type="match status" value="1"/>
</dbReference>
<dbReference type="Gene3D" id="1.10.1350.10">
    <property type="entry name" value="Viral capsid alpha domain"/>
    <property type="match status" value="1"/>
</dbReference>
<dbReference type="HAMAP" id="MF_04126">
    <property type="entry name" value="Rota_VP6"/>
    <property type="match status" value="1"/>
</dbReference>
<dbReference type="HAMAP" id="MF_04129">
    <property type="entry name" value="Rota_VP6_A"/>
    <property type="match status" value="1"/>
</dbReference>
<dbReference type="InterPro" id="IPR008980">
    <property type="entry name" value="Capsid_hemagglutn"/>
</dbReference>
<dbReference type="InterPro" id="IPR001385">
    <property type="entry name" value="Rotavirus_A/C_VP6"/>
</dbReference>
<dbReference type="InterPro" id="IPR008935">
    <property type="entry name" value="Virus_capsid_a-hlx_vir"/>
</dbReference>
<dbReference type="Pfam" id="PF00980">
    <property type="entry name" value="Rota_Capsid_VP6"/>
    <property type="match status" value="1"/>
</dbReference>
<dbReference type="SUPFAM" id="SSF48345">
    <property type="entry name" value="A virus capsid protein alpha-helical domain"/>
    <property type="match status" value="1"/>
</dbReference>
<dbReference type="SUPFAM" id="SSF49818">
    <property type="entry name" value="Viral protein domain"/>
    <property type="match status" value="1"/>
</dbReference>
<organism>
    <name type="scientific">Rotavirus A (isolate RVA/Monkey/United States/TUCH/2003/G3P[24])</name>
    <name type="common">RV-A</name>
    <dbReference type="NCBI Taxonomy" id="444186"/>
    <lineage>
        <taxon>Viruses</taxon>
        <taxon>Riboviria</taxon>
        <taxon>Orthornavirae</taxon>
        <taxon>Duplornaviricota</taxon>
        <taxon>Resentoviricetes</taxon>
        <taxon>Reovirales</taxon>
        <taxon>Sedoreoviridae</taxon>
        <taxon>Rotavirus</taxon>
        <taxon>Rotavirus A</taxon>
    </lineage>
</organism>